<sequence>MRSLVVCLLLAACALECTARLQNVTVKGVAVCNKKRLANVEVQLYEKDTLDPDDLLDTKKTDAEGEFSVYGEEDETHAIAPYLLITHSCNPSKPNCVRIGRYLVPEDKIGGTYDMTYVTLDIKVHGEKEKCQ</sequence>
<accession>P55955</accession>
<accession>Q9XWL2</accession>
<name>TTR16_CAEEL</name>
<proteinExistence type="evidence at protein level"/>
<dbReference type="EMBL" id="AL032641">
    <property type="protein sequence ID" value="CAA21645.1"/>
    <property type="molecule type" value="Genomic_DNA"/>
</dbReference>
<dbReference type="PIR" id="T27247">
    <property type="entry name" value="T27247"/>
</dbReference>
<dbReference type="RefSeq" id="NP_001369817.1">
    <property type="nucleotide sequence ID" value="NM_001383201.2"/>
</dbReference>
<dbReference type="RefSeq" id="NP_502060.1">
    <property type="nucleotide sequence ID" value="NM_069659.5"/>
</dbReference>
<dbReference type="SMR" id="P55955"/>
<dbReference type="BioGRID" id="43102">
    <property type="interactions" value="14"/>
</dbReference>
<dbReference type="FunCoup" id="P55955">
    <property type="interactions" value="191"/>
</dbReference>
<dbReference type="STRING" id="6239.Y5F2A.1.2"/>
<dbReference type="GlyCosmos" id="P55955">
    <property type="glycosylation" value="1 site, No reported glycans"/>
</dbReference>
<dbReference type="iPTMnet" id="P55955"/>
<dbReference type="PaxDb" id="6239-Y5F2A.1"/>
<dbReference type="PeptideAtlas" id="P55955"/>
<dbReference type="EnsemblMetazoa" id="Y5F2A.1.1">
    <property type="protein sequence ID" value="Y5F2A.1.1"/>
    <property type="gene ID" value="WBGene00012382"/>
</dbReference>
<dbReference type="GeneID" id="178002"/>
<dbReference type="AGR" id="WB:WBGene00012382"/>
<dbReference type="WormBase" id="Y5F2A.1">
    <property type="protein sequence ID" value="CE19022"/>
    <property type="gene ID" value="WBGene00012382"/>
    <property type="gene designation" value="ttr-16"/>
</dbReference>
<dbReference type="eggNOG" id="ENOG502R6UF">
    <property type="taxonomic scope" value="Eukaryota"/>
</dbReference>
<dbReference type="HOGENOM" id="CLU_121109_0_0_1"/>
<dbReference type="InParanoid" id="P55955"/>
<dbReference type="OMA" id="THNCNPS"/>
<dbReference type="OrthoDB" id="5826894at2759"/>
<dbReference type="PhylomeDB" id="P55955"/>
<dbReference type="PRO" id="PR:P55955"/>
<dbReference type="Proteomes" id="UP000001940">
    <property type="component" value="Chromosome IV"/>
</dbReference>
<dbReference type="Bgee" id="WBGene00012382">
    <property type="expression patterns" value="Expressed in larva and 4 other cell types or tissues"/>
</dbReference>
<dbReference type="GO" id="GO:0009986">
    <property type="term" value="C:cell surface"/>
    <property type="evidence" value="ECO:0007669"/>
    <property type="project" value="InterPro"/>
</dbReference>
<dbReference type="GO" id="GO:0005576">
    <property type="term" value="C:extracellular region"/>
    <property type="evidence" value="ECO:0007669"/>
    <property type="project" value="UniProtKB-SubCell"/>
</dbReference>
<dbReference type="Gene3D" id="2.60.40.3330">
    <property type="match status" value="1"/>
</dbReference>
<dbReference type="InterPro" id="IPR001534">
    <property type="entry name" value="Transthyretin-like"/>
</dbReference>
<dbReference type="InterPro" id="IPR038479">
    <property type="entry name" value="Transthyretin-like_sf"/>
</dbReference>
<dbReference type="PANTHER" id="PTHR21700">
    <property type="entry name" value="TRANSTHYRETIN-LIKE FAMILY PROTEIN-RELATED"/>
    <property type="match status" value="1"/>
</dbReference>
<dbReference type="PANTHER" id="PTHR21700:SF116">
    <property type="entry name" value="TRANSTHYRETIN-LIKE PROTEIN 16"/>
    <property type="match status" value="1"/>
</dbReference>
<dbReference type="Pfam" id="PF01060">
    <property type="entry name" value="TTR-52"/>
    <property type="match status" value="1"/>
</dbReference>
<protein>
    <recommendedName>
        <fullName>Transthyretin-like protein 16</fullName>
    </recommendedName>
    <alternativeName>
        <fullName>Unknown spot 4 protein from 2D-page</fullName>
    </alternativeName>
</protein>
<keyword id="KW-0903">Direct protein sequencing</keyword>
<keyword id="KW-0325">Glycoprotein</keyword>
<keyword id="KW-1185">Reference proteome</keyword>
<keyword id="KW-0964">Secreted</keyword>
<keyword id="KW-0732">Signal</keyword>
<evidence type="ECO:0000269" key="1">
    <source>
    </source>
</evidence>
<evidence type="ECO:0000269" key="2">
    <source>
    </source>
</evidence>
<evidence type="ECO:0000269" key="3">
    <source>
    </source>
</evidence>
<evidence type="ECO:0000269" key="4">
    <source>
    </source>
</evidence>
<evidence type="ECO:0000305" key="5"/>
<comment type="subcellular location">
    <subcellularLocation>
        <location>Secreted</location>
    </subcellularLocation>
</comment>
<comment type="similarity">
    <text evidence="5">Belongs to the nematode transthyretin-like family.</text>
</comment>
<organism>
    <name type="scientific">Caenorhabditis elegans</name>
    <dbReference type="NCBI Taxonomy" id="6239"/>
    <lineage>
        <taxon>Eukaryota</taxon>
        <taxon>Metazoa</taxon>
        <taxon>Ecdysozoa</taxon>
        <taxon>Nematoda</taxon>
        <taxon>Chromadorea</taxon>
        <taxon>Rhabditida</taxon>
        <taxon>Rhabditina</taxon>
        <taxon>Rhabditomorpha</taxon>
        <taxon>Rhabditoidea</taxon>
        <taxon>Rhabditidae</taxon>
        <taxon>Peloderinae</taxon>
        <taxon>Caenorhabditis</taxon>
    </lineage>
</organism>
<feature type="signal peptide" evidence="4">
    <location>
        <begin position="1"/>
        <end position="19"/>
    </location>
</feature>
<feature type="chain" id="PRO_0000036249" description="Transthyretin-like protein 16">
    <location>
        <begin position="20"/>
        <end position="132"/>
    </location>
</feature>
<feature type="glycosylation site" description="N-linked (GlcNAc...) asparagine" evidence="1 2 3">
    <location>
        <position position="23"/>
    </location>
</feature>
<reference key="1">
    <citation type="journal article" date="1998" name="Science">
        <title>Genome sequence of the nematode C. elegans: a platform for investigating biology.</title>
        <authorList>
            <consortium name="The C. elegans sequencing consortium"/>
        </authorList>
    </citation>
    <scope>NUCLEOTIDE SEQUENCE [LARGE SCALE GENOMIC DNA]</scope>
    <source>
        <strain>Bristol N2</strain>
    </source>
</reference>
<reference key="2">
    <citation type="journal article" date="1997" name="Electrophoresis">
        <title>Two-dimensional gel electrophoresis of Caenorhabditis elegans homogenates and identification of protein spots by microsequencing.</title>
        <authorList>
            <person name="Bini L."/>
            <person name="Heid H."/>
            <person name="Liberatori S."/>
            <person name="Geier G."/>
            <person name="Pallini V."/>
            <person name="Zwilling R."/>
        </authorList>
    </citation>
    <scope>PROTEIN SEQUENCE OF 20-42</scope>
    <source>
        <strain>Bristol N2</strain>
    </source>
</reference>
<reference key="3">
    <citation type="journal article" date="2003" name="Nat. Biotechnol.">
        <title>Lectin affinity capture, isotope-coded tagging and mass spectrometry to identify N-linked glycoproteins.</title>
        <authorList>
            <person name="Kaji H."/>
            <person name="Saito H."/>
            <person name="Yamauchi Y."/>
            <person name="Shinkawa T."/>
            <person name="Taoka M."/>
            <person name="Hirabayashi J."/>
            <person name="Kasai K."/>
            <person name="Takahashi N."/>
            <person name="Isobe T."/>
        </authorList>
    </citation>
    <scope>GLYCOSYLATION [LARGE SCALE ANALYSIS] AT ASN-23</scope>
    <scope>IDENTIFICATION BY MASS SPECTROMETRY</scope>
    <source>
        <strain>Bristol N2</strain>
    </source>
</reference>
<reference key="4">
    <citation type="journal article" date="2005" name="Glycobiology">
        <title>Identification of the hydrophobic glycoproteins of Caenorhabditis elegans.</title>
        <authorList>
            <person name="Fan X."/>
            <person name="She Y.-M."/>
            <person name="Bagshaw R.D."/>
            <person name="Callahan J.W."/>
            <person name="Schachter H."/>
            <person name="Mahuran D.J."/>
        </authorList>
    </citation>
    <scope>GLYCOSYLATION [LARGE SCALE ANALYSIS] AT ASN-23</scope>
    <scope>IDENTIFICATION BY MASS SPECTROMETRY</scope>
</reference>
<reference key="5">
    <citation type="journal article" date="2007" name="Mol. Cell. Proteomics">
        <title>Proteomics reveals N-linked glycoprotein diversity in Caenorhabditis elegans and suggests an atypical translocation mechanism for integral membrane proteins.</title>
        <authorList>
            <person name="Kaji H."/>
            <person name="Kamiie J."/>
            <person name="Kawakami H."/>
            <person name="Kido K."/>
            <person name="Yamauchi Y."/>
            <person name="Shinkawa T."/>
            <person name="Taoka M."/>
            <person name="Takahashi N."/>
            <person name="Isobe T."/>
        </authorList>
    </citation>
    <scope>GLYCOSYLATION [LARGE SCALE ANALYSIS] AT ASN-23</scope>
    <scope>IDENTIFICATION BY MASS SPECTROMETRY</scope>
    <source>
        <strain>Bristol N2</strain>
    </source>
</reference>
<gene>
    <name type="primary">ttr-16</name>
    <name type="ORF">Y5F2A.1</name>
</gene>